<dbReference type="EMBL" id="AB025718">
    <property type="protein sequence ID" value="BAA99416.1"/>
    <property type="molecule type" value="mRNA"/>
</dbReference>
<dbReference type="EMBL" id="AK007574">
    <property type="protein sequence ID" value="BAB25115.1"/>
    <property type="molecule type" value="mRNA"/>
</dbReference>
<dbReference type="EMBL" id="BC049592">
    <property type="protein sequence ID" value="AAH49592.1"/>
    <property type="molecule type" value="mRNA"/>
</dbReference>
<dbReference type="CCDS" id="CCDS21253.1"/>
<dbReference type="RefSeq" id="NP_064397.1">
    <property type="nucleotide sequence ID" value="NM_020013.4"/>
</dbReference>
<dbReference type="RefSeq" id="XP_011249181.1">
    <property type="nucleotide sequence ID" value="XM_011250879.1"/>
</dbReference>
<dbReference type="RefSeq" id="XP_011249182.1">
    <property type="nucleotide sequence ID" value="XM_011250880.1"/>
</dbReference>
<dbReference type="SMR" id="Q9JJN1"/>
<dbReference type="DIP" id="DIP-60919N"/>
<dbReference type="FunCoup" id="Q9JJN1">
    <property type="interactions" value="927"/>
</dbReference>
<dbReference type="IntAct" id="Q9JJN1">
    <property type="interactions" value="2"/>
</dbReference>
<dbReference type="STRING" id="10090.ENSMUSP00000033099"/>
<dbReference type="PaxDb" id="10090-ENSMUSP00000033099"/>
<dbReference type="ProteomicsDB" id="271694"/>
<dbReference type="Antibodypedia" id="31805">
    <property type="antibodies" value="835 antibodies from 37 providers"/>
</dbReference>
<dbReference type="DNASU" id="56636"/>
<dbReference type="Ensembl" id="ENSMUST00000033099.6">
    <property type="protein sequence ID" value="ENSMUSP00000033099.5"/>
    <property type="gene ID" value="ENSMUSG00000030827.6"/>
</dbReference>
<dbReference type="GeneID" id="56636"/>
<dbReference type="KEGG" id="mmu:56636"/>
<dbReference type="UCSC" id="uc009gwe.1">
    <property type="organism name" value="mouse"/>
</dbReference>
<dbReference type="AGR" id="MGI:1861377"/>
<dbReference type="CTD" id="26291"/>
<dbReference type="MGI" id="MGI:1861377">
    <property type="gene designation" value="Fgf21"/>
</dbReference>
<dbReference type="VEuPathDB" id="HostDB:ENSMUSG00000030827"/>
<dbReference type="eggNOG" id="KOG3885">
    <property type="taxonomic scope" value="Eukaryota"/>
</dbReference>
<dbReference type="GeneTree" id="ENSGT00940000161866"/>
<dbReference type="HOGENOM" id="CLU_094251_2_0_1"/>
<dbReference type="InParanoid" id="Q9JJN1"/>
<dbReference type="OMA" id="EEACNFH"/>
<dbReference type="OrthoDB" id="5987799at2759"/>
<dbReference type="PhylomeDB" id="Q9JJN1"/>
<dbReference type="TreeFam" id="TF335872"/>
<dbReference type="Reactome" id="R-MMU-189200">
    <property type="pathway name" value="Cellular hexose transport"/>
</dbReference>
<dbReference type="BioGRID-ORCS" id="56636">
    <property type="hits" value="3 hits in 77 CRISPR screens"/>
</dbReference>
<dbReference type="PRO" id="PR:Q9JJN1"/>
<dbReference type="Proteomes" id="UP000000589">
    <property type="component" value="Chromosome 7"/>
</dbReference>
<dbReference type="RNAct" id="Q9JJN1">
    <property type="molecule type" value="protein"/>
</dbReference>
<dbReference type="Bgee" id="ENSMUSG00000030827">
    <property type="expression patterns" value="Expressed in pyloric antrum and 29 other cell types or tissues"/>
</dbReference>
<dbReference type="GO" id="GO:0005829">
    <property type="term" value="C:cytosol"/>
    <property type="evidence" value="ECO:0000304"/>
    <property type="project" value="Reactome"/>
</dbReference>
<dbReference type="GO" id="GO:0005615">
    <property type="term" value="C:extracellular space"/>
    <property type="evidence" value="ECO:0000314"/>
    <property type="project" value="UniProtKB"/>
</dbReference>
<dbReference type="GO" id="GO:0005104">
    <property type="term" value="F:fibroblast growth factor receptor binding"/>
    <property type="evidence" value="ECO:0007669"/>
    <property type="project" value="InterPro"/>
</dbReference>
<dbReference type="GO" id="GO:0008083">
    <property type="term" value="F:growth factor activity"/>
    <property type="evidence" value="ECO:0007669"/>
    <property type="project" value="UniProtKB-KW"/>
</dbReference>
<dbReference type="GO" id="GO:0008284">
    <property type="term" value="P:positive regulation of cell population proliferation"/>
    <property type="evidence" value="ECO:0000316"/>
    <property type="project" value="MGI"/>
</dbReference>
<dbReference type="GO" id="GO:0120162">
    <property type="term" value="P:positive regulation of cold-induced thermogenesis"/>
    <property type="evidence" value="ECO:0000315"/>
    <property type="project" value="YuBioLab"/>
</dbReference>
<dbReference type="GO" id="GO:0046326">
    <property type="term" value="P:positive regulation of D-glucose import"/>
    <property type="evidence" value="ECO:0007669"/>
    <property type="project" value="Ensembl"/>
</dbReference>
<dbReference type="GO" id="GO:0070374">
    <property type="term" value="P:positive regulation of ERK1 and ERK2 cascade"/>
    <property type="evidence" value="ECO:0007669"/>
    <property type="project" value="Ensembl"/>
</dbReference>
<dbReference type="GO" id="GO:0090080">
    <property type="term" value="P:positive regulation of MAPKKK cascade by fibroblast growth factor receptor signaling pathway"/>
    <property type="evidence" value="ECO:0000316"/>
    <property type="project" value="MGI"/>
</dbReference>
<dbReference type="FunFam" id="2.80.10.50:FF:000053">
    <property type="entry name" value="Fibroblast growth factor"/>
    <property type="match status" value="1"/>
</dbReference>
<dbReference type="Gene3D" id="2.80.10.50">
    <property type="match status" value="1"/>
</dbReference>
<dbReference type="InterPro" id="IPR035444">
    <property type="entry name" value="FGF15/19/21"/>
</dbReference>
<dbReference type="InterPro" id="IPR002209">
    <property type="entry name" value="Fibroblast_GF_fam"/>
</dbReference>
<dbReference type="InterPro" id="IPR008996">
    <property type="entry name" value="IL1/FGF"/>
</dbReference>
<dbReference type="PANTHER" id="PTHR11486">
    <property type="entry name" value="FIBROBLAST GROWTH FACTOR"/>
    <property type="match status" value="1"/>
</dbReference>
<dbReference type="Pfam" id="PF00167">
    <property type="entry name" value="FGF"/>
    <property type="match status" value="1"/>
</dbReference>
<dbReference type="PIRSF" id="PIRSF037961">
    <property type="entry name" value="FGF-19_FGF-21"/>
    <property type="match status" value="1"/>
</dbReference>
<dbReference type="PRINTS" id="PR00263">
    <property type="entry name" value="HBGFFGF"/>
</dbReference>
<dbReference type="PRINTS" id="PR00262">
    <property type="entry name" value="IL1HBGF"/>
</dbReference>
<dbReference type="SMART" id="SM00442">
    <property type="entry name" value="FGF"/>
    <property type="match status" value="1"/>
</dbReference>
<dbReference type="SUPFAM" id="SSF50353">
    <property type="entry name" value="Cytokine"/>
    <property type="match status" value="1"/>
</dbReference>
<dbReference type="PROSITE" id="PS00247">
    <property type="entry name" value="HBGF_FGF"/>
    <property type="match status" value="1"/>
</dbReference>
<accession>Q9JJN1</accession>
<comment type="function">
    <text evidence="5 7">Stimulates glucose uptake in differentiated adipocytes via the induction of glucose transporter SLC2A1/GLUT1 expression (but not SLC2A4/GLUT4 expression). Activity probably requires the presence of KLB. Regulates systemic glucose homeostasis and insulin sensitivity.</text>
</comment>
<comment type="subunit">
    <text evidence="1">Interacts (via C-terminus) with KLB; this interaction is direct. Interacts with FGFR4 (By similarity).</text>
</comment>
<comment type="subcellular location">
    <subcellularLocation>
        <location evidence="7">Secreted</location>
    </subcellularLocation>
</comment>
<comment type="tissue specificity">
    <text evidence="4 6 7">Most abundantly expressed in the liver, also expressed in the thymus at lower levels (PubMed:10858549, PubMed:30389664). Expressed in skeletal muscle (at protein level). Secreted in plasma (at protein level) (PubMed:30605666).</text>
</comment>
<comment type="induction">
    <text evidence="6">In the liver, down-regulated in postprandial conditions (PubMed:30389664). Up-regulated at the transcriptional level by CREB3L3 (PubMed:30389664).</text>
</comment>
<comment type="similarity">
    <text evidence="8">Belongs to the heparin-binding growth factors family.</text>
</comment>
<feature type="signal peptide" evidence="2">
    <location>
        <begin position="1"/>
        <end position="28"/>
    </location>
</feature>
<feature type="chain" id="PRO_0000008995" description="Fibroblast growth factor 21">
    <location>
        <begin position="29"/>
        <end position="210"/>
    </location>
</feature>
<feature type="region of interest" description="Disordered" evidence="3">
    <location>
        <begin position="144"/>
        <end position="210"/>
    </location>
</feature>
<name>FGF21_MOUSE</name>
<evidence type="ECO:0000250" key="1"/>
<evidence type="ECO:0000255" key="2"/>
<evidence type="ECO:0000256" key="3">
    <source>
        <dbReference type="SAM" id="MobiDB-lite"/>
    </source>
</evidence>
<evidence type="ECO:0000269" key="4">
    <source>
    </source>
</evidence>
<evidence type="ECO:0000269" key="5">
    <source>
    </source>
</evidence>
<evidence type="ECO:0000269" key="6">
    <source>
    </source>
</evidence>
<evidence type="ECO:0000269" key="7">
    <source>
    </source>
</evidence>
<evidence type="ECO:0000305" key="8"/>
<reference key="1">
    <citation type="journal article" date="2000" name="Biochim. Biophys. Acta">
        <title>Identification of a novel FGF, FGF-21, preferentially expressed in the liver.</title>
        <authorList>
            <person name="Nishimura T."/>
            <person name="Nakatake Y."/>
            <person name="Konishi M."/>
            <person name="Itoh N."/>
        </authorList>
    </citation>
    <scope>NUCLEOTIDE SEQUENCE [MRNA]</scope>
    <scope>TISSUE SPECIFICITY</scope>
</reference>
<reference key="2">
    <citation type="journal article" date="2005" name="Science">
        <title>The transcriptional landscape of the mammalian genome.</title>
        <authorList>
            <person name="Carninci P."/>
            <person name="Kasukawa T."/>
            <person name="Katayama S."/>
            <person name="Gough J."/>
            <person name="Frith M.C."/>
            <person name="Maeda N."/>
            <person name="Oyama R."/>
            <person name="Ravasi T."/>
            <person name="Lenhard B."/>
            <person name="Wells C."/>
            <person name="Kodzius R."/>
            <person name="Shimokawa K."/>
            <person name="Bajic V.B."/>
            <person name="Brenner S.E."/>
            <person name="Batalov S."/>
            <person name="Forrest A.R."/>
            <person name="Zavolan M."/>
            <person name="Davis M.J."/>
            <person name="Wilming L.G."/>
            <person name="Aidinis V."/>
            <person name="Allen J.E."/>
            <person name="Ambesi-Impiombato A."/>
            <person name="Apweiler R."/>
            <person name="Aturaliya R.N."/>
            <person name="Bailey T.L."/>
            <person name="Bansal M."/>
            <person name="Baxter L."/>
            <person name="Beisel K.W."/>
            <person name="Bersano T."/>
            <person name="Bono H."/>
            <person name="Chalk A.M."/>
            <person name="Chiu K.P."/>
            <person name="Choudhary V."/>
            <person name="Christoffels A."/>
            <person name="Clutterbuck D.R."/>
            <person name="Crowe M.L."/>
            <person name="Dalla E."/>
            <person name="Dalrymple B.P."/>
            <person name="de Bono B."/>
            <person name="Della Gatta G."/>
            <person name="di Bernardo D."/>
            <person name="Down T."/>
            <person name="Engstrom P."/>
            <person name="Fagiolini M."/>
            <person name="Faulkner G."/>
            <person name="Fletcher C.F."/>
            <person name="Fukushima T."/>
            <person name="Furuno M."/>
            <person name="Futaki S."/>
            <person name="Gariboldi M."/>
            <person name="Georgii-Hemming P."/>
            <person name="Gingeras T.R."/>
            <person name="Gojobori T."/>
            <person name="Green R.E."/>
            <person name="Gustincich S."/>
            <person name="Harbers M."/>
            <person name="Hayashi Y."/>
            <person name="Hensch T.K."/>
            <person name="Hirokawa N."/>
            <person name="Hill D."/>
            <person name="Huminiecki L."/>
            <person name="Iacono M."/>
            <person name="Ikeo K."/>
            <person name="Iwama A."/>
            <person name="Ishikawa T."/>
            <person name="Jakt M."/>
            <person name="Kanapin A."/>
            <person name="Katoh M."/>
            <person name="Kawasawa Y."/>
            <person name="Kelso J."/>
            <person name="Kitamura H."/>
            <person name="Kitano H."/>
            <person name="Kollias G."/>
            <person name="Krishnan S.P."/>
            <person name="Kruger A."/>
            <person name="Kummerfeld S.K."/>
            <person name="Kurochkin I.V."/>
            <person name="Lareau L.F."/>
            <person name="Lazarevic D."/>
            <person name="Lipovich L."/>
            <person name="Liu J."/>
            <person name="Liuni S."/>
            <person name="McWilliam S."/>
            <person name="Madan Babu M."/>
            <person name="Madera M."/>
            <person name="Marchionni L."/>
            <person name="Matsuda H."/>
            <person name="Matsuzawa S."/>
            <person name="Miki H."/>
            <person name="Mignone F."/>
            <person name="Miyake S."/>
            <person name="Morris K."/>
            <person name="Mottagui-Tabar S."/>
            <person name="Mulder N."/>
            <person name="Nakano N."/>
            <person name="Nakauchi H."/>
            <person name="Ng P."/>
            <person name="Nilsson R."/>
            <person name="Nishiguchi S."/>
            <person name="Nishikawa S."/>
            <person name="Nori F."/>
            <person name="Ohara O."/>
            <person name="Okazaki Y."/>
            <person name="Orlando V."/>
            <person name="Pang K.C."/>
            <person name="Pavan W.J."/>
            <person name="Pavesi G."/>
            <person name="Pesole G."/>
            <person name="Petrovsky N."/>
            <person name="Piazza S."/>
            <person name="Reed J."/>
            <person name="Reid J.F."/>
            <person name="Ring B.Z."/>
            <person name="Ringwald M."/>
            <person name="Rost B."/>
            <person name="Ruan Y."/>
            <person name="Salzberg S.L."/>
            <person name="Sandelin A."/>
            <person name="Schneider C."/>
            <person name="Schoenbach C."/>
            <person name="Sekiguchi K."/>
            <person name="Semple C.A."/>
            <person name="Seno S."/>
            <person name="Sessa L."/>
            <person name="Sheng Y."/>
            <person name="Shibata Y."/>
            <person name="Shimada H."/>
            <person name="Shimada K."/>
            <person name="Silva D."/>
            <person name="Sinclair B."/>
            <person name="Sperling S."/>
            <person name="Stupka E."/>
            <person name="Sugiura K."/>
            <person name="Sultana R."/>
            <person name="Takenaka Y."/>
            <person name="Taki K."/>
            <person name="Tammoja K."/>
            <person name="Tan S.L."/>
            <person name="Tang S."/>
            <person name="Taylor M.S."/>
            <person name="Tegner J."/>
            <person name="Teichmann S.A."/>
            <person name="Ueda H.R."/>
            <person name="van Nimwegen E."/>
            <person name="Verardo R."/>
            <person name="Wei C.L."/>
            <person name="Yagi K."/>
            <person name="Yamanishi H."/>
            <person name="Zabarovsky E."/>
            <person name="Zhu S."/>
            <person name="Zimmer A."/>
            <person name="Hide W."/>
            <person name="Bult C."/>
            <person name="Grimmond S.M."/>
            <person name="Teasdale R.D."/>
            <person name="Liu E.T."/>
            <person name="Brusic V."/>
            <person name="Quackenbush J."/>
            <person name="Wahlestedt C."/>
            <person name="Mattick J.S."/>
            <person name="Hume D.A."/>
            <person name="Kai C."/>
            <person name="Sasaki D."/>
            <person name="Tomaru Y."/>
            <person name="Fukuda S."/>
            <person name="Kanamori-Katayama M."/>
            <person name="Suzuki M."/>
            <person name="Aoki J."/>
            <person name="Arakawa T."/>
            <person name="Iida J."/>
            <person name="Imamura K."/>
            <person name="Itoh M."/>
            <person name="Kato T."/>
            <person name="Kawaji H."/>
            <person name="Kawagashira N."/>
            <person name="Kawashima T."/>
            <person name="Kojima M."/>
            <person name="Kondo S."/>
            <person name="Konno H."/>
            <person name="Nakano K."/>
            <person name="Ninomiya N."/>
            <person name="Nishio T."/>
            <person name="Okada M."/>
            <person name="Plessy C."/>
            <person name="Shibata K."/>
            <person name="Shiraki T."/>
            <person name="Suzuki S."/>
            <person name="Tagami M."/>
            <person name="Waki K."/>
            <person name="Watahiki A."/>
            <person name="Okamura-Oho Y."/>
            <person name="Suzuki H."/>
            <person name="Kawai J."/>
            <person name="Hayashizaki Y."/>
        </authorList>
    </citation>
    <scope>NUCLEOTIDE SEQUENCE [LARGE SCALE MRNA]</scope>
    <source>
        <strain>C57BL/6J</strain>
        <tissue>Pancreas</tissue>
    </source>
</reference>
<reference key="3">
    <citation type="journal article" date="2004" name="Genome Res.">
        <title>The status, quality, and expansion of the NIH full-length cDNA project: the Mammalian Gene Collection (MGC).</title>
        <authorList>
            <consortium name="The MGC Project Team"/>
        </authorList>
    </citation>
    <scope>NUCLEOTIDE SEQUENCE [LARGE SCALE MRNA]</scope>
    <source>
        <tissue>Testis</tissue>
    </source>
</reference>
<reference key="4">
    <citation type="journal article" date="2005" name="J. Clin. Invest.">
        <title>FGF-21 as a novel metabolic regulator.</title>
        <authorList>
            <person name="Kharitonenkov A."/>
            <person name="Shiyanova T.L."/>
            <person name="Koester A."/>
            <person name="Ford A.M."/>
            <person name="Micanovic R."/>
            <person name="Galbreath E.J."/>
            <person name="Sandusky G.E."/>
            <person name="Hammond L.J."/>
            <person name="Moyers J.S."/>
            <person name="Owens R.A."/>
            <person name="Gromada J."/>
            <person name="Brozinick J.T."/>
            <person name="Hawkins E.D."/>
            <person name="Wroblewski V.J."/>
            <person name="Li D.-S."/>
            <person name="Mehrbod F."/>
            <person name="Jaskunas S.R."/>
            <person name="Shanafelt A.B."/>
        </authorList>
    </citation>
    <scope>FUNCTION</scope>
</reference>
<reference key="5">
    <citation type="journal article" date="2018" name="EMBO J.">
        <title>HRD1-ERAD controls production of the hepatokine FGF21 through CREBH polyubiquitination.</title>
        <authorList>
            <person name="Wei J."/>
            <person name="Chen L."/>
            <person name="Li F."/>
            <person name="Yuan Y."/>
            <person name="Wang Y."/>
            <person name="Xia W."/>
            <person name="Zhang Y."/>
            <person name="Xu Y."/>
            <person name="Yang Z."/>
            <person name="Gao B."/>
            <person name="Jin C."/>
            <person name="Melo-Cardenas J."/>
            <person name="Green R.M."/>
            <person name="Pan H."/>
            <person name="Wang J."/>
            <person name="He F."/>
            <person name="Zhang K."/>
            <person name="Fang D."/>
        </authorList>
    </citation>
    <scope>TISSUE SPECIFICITY</scope>
    <scope>INDUCTION</scope>
</reference>
<reference key="6">
    <citation type="journal article" date="2019" name="Cell Rep.">
        <title>CerS1-Derived C18:0 Ceramide in Skeletal Muscle Promotes Obesity-Induced Insulin Resistance.</title>
        <authorList>
            <person name="Turpin-Nolan S.M."/>
            <person name="Hammerschmidt P."/>
            <person name="Chen W."/>
            <person name="Jais A."/>
            <person name="Timper K."/>
            <person name="Awazawa M."/>
            <person name="Brodesser S."/>
            <person name="Bruening J.C."/>
        </authorList>
    </citation>
    <scope>FUNCTION</scope>
    <scope>SUBCELLULAR LOCATION</scope>
    <scope>TISSUE SPECIFICITY</scope>
</reference>
<organism>
    <name type="scientific">Mus musculus</name>
    <name type="common">Mouse</name>
    <dbReference type="NCBI Taxonomy" id="10090"/>
    <lineage>
        <taxon>Eukaryota</taxon>
        <taxon>Metazoa</taxon>
        <taxon>Chordata</taxon>
        <taxon>Craniata</taxon>
        <taxon>Vertebrata</taxon>
        <taxon>Euteleostomi</taxon>
        <taxon>Mammalia</taxon>
        <taxon>Eutheria</taxon>
        <taxon>Euarchontoglires</taxon>
        <taxon>Glires</taxon>
        <taxon>Rodentia</taxon>
        <taxon>Myomorpha</taxon>
        <taxon>Muroidea</taxon>
        <taxon>Muridae</taxon>
        <taxon>Murinae</taxon>
        <taxon>Mus</taxon>
        <taxon>Mus</taxon>
    </lineage>
</organism>
<proteinExistence type="evidence at protein level"/>
<sequence>MEWMRSRVGTLGLWVRLLLAVFLLGVYQAYPIPDSSPLLQFGGQVRQRYLYTDDDQDTEAHLEIREDGTVVGAAHRSPESLLELKALKPGVIQILGVKASRFLCQQPDGALYGSPHFDPEACSFRELLLEDGYNVYQSEAHGLPLRLPQKDSPNQDATSWGPVRFLPMPGLLHEPQDQAGFLPPEPPDVGSSDPLSMVEPLQGRSPSYAS</sequence>
<gene>
    <name type="primary">Fgf21</name>
</gene>
<protein>
    <recommendedName>
        <fullName>Fibroblast growth factor 21</fullName>
        <shortName>FGF-21</shortName>
    </recommendedName>
</protein>
<keyword id="KW-0339">Growth factor</keyword>
<keyword id="KW-1185">Reference proteome</keyword>
<keyword id="KW-0964">Secreted</keyword>
<keyword id="KW-0732">Signal</keyword>